<comment type="function">
    <text evidence="1">Probable transcription factor.</text>
</comment>
<comment type="subcellular location">
    <subcellularLocation>
        <location evidence="6">Nucleus</location>
    </subcellularLocation>
</comment>
<comment type="tissue specificity">
    <text evidence="5">Expressed in roots, stems, leaf blades and panicles.</text>
</comment>
<comment type="similarity">
    <text evidence="6">Belongs to the HD-ZIP homeobox family. Class I subfamily.</text>
</comment>
<sequence>MDRYGEKQQQQQMFASYVDASLLAASGEVQGERPRARRRRRRGARCVGGGGGGGEVDGGDPKKRRLSDEQVEMLELSFREERKLETGRKVHLASELGLDPKQVAVWFQNRRARHKSKLLEEEFSKLKHAHDAAILHKCHLENEVLRLKERLVVAEEEVRRLRSAAGSHTASGEGGDIMGLGGSGACVAGSPSSSFSTGTCQPPSFGGGDHLGDDDLVYVPEYGGYADNSVVEWFSLYGLI</sequence>
<evidence type="ECO:0000250" key="1"/>
<evidence type="ECO:0000255" key="2"/>
<evidence type="ECO:0000255" key="3">
    <source>
        <dbReference type="PROSITE-ProRule" id="PRU00108"/>
    </source>
</evidence>
<evidence type="ECO:0000256" key="4">
    <source>
        <dbReference type="SAM" id="MobiDB-lite"/>
    </source>
</evidence>
<evidence type="ECO:0000269" key="5">
    <source>
    </source>
</evidence>
<evidence type="ECO:0000305" key="6"/>
<protein>
    <recommendedName>
        <fullName>Homeobox-leucine zipper protein HOX14</fullName>
    </recommendedName>
    <alternativeName>
        <fullName>HD-ZIP protein HOX14</fullName>
    </alternativeName>
    <alternativeName>
        <fullName>Homeodomain transcription factor HOX14</fullName>
    </alternativeName>
    <alternativeName>
        <fullName>OsHox14</fullName>
    </alternativeName>
</protein>
<keyword id="KW-0175">Coiled coil</keyword>
<keyword id="KW-0238">DNA-binding</keyword>
<keyword id="KW-0371">Homeobox</keyword>
<keyword id="KW-0539">Nucleus</keyword>
<keyword id="KW-1185">Reference proteome</keyword>
<keyword id="KW-0804">Transcription</keyword>
<keyword id="KW-0805">Transcription regulation</keyword>
<gene>
    <name type="primary">HOX14</name>
    <name type="ordered locus">Os07g0581700</name>
    <name type="ordered locus">LOC_Os07g39320</name>
    <name type="ORF">OJ1301_C12.13</name>
    <name type="ORF">OsJ_023919</name>
    <name type="ORF">P0453G03.37</name>
</gene>
<feature type="chain" id="PRO_0000331701" description="Homeobox-leucine zipper protein HOX14">
    <location>
        <begin position="1"/>
        <end position="240"/>
    </location>
</feature>
<feature type="DNA-binding region" description="Homeobox" evidence="3">
    <location>
        <begin position="59"/>
        <end position="118"/>
    </location>
</feature>
<feature type="region of interest" description="Disordered" evidence="4">
    <location>
        <begin position="26"/>
        <end position="64"/>
    </location>
</feature>
<feature type="coiled-coil region" evidence="2">
    <location>
        <begin position="108"/>
        <end position="167"/>
    </location>
</feature>
<feature type="compositionally biased region" description="Basic residues" evidence="4">
    <location>
        <begin position="35"/>
        <end position="44"/>
    </location>
</feature>
<feature type="compositionally biased region" description="Gly residues" evidence="4">
    <location>
        <begin position="46"/>
        <end position="56"/>
    </location>
</feature>
<feature type="sequence conflict" description="In Ref. 1; AAS68139." evidence="6" ref="1">
    <original>S</original>
    <variation>W</variation>
    <location>
        <position position="196"/>
    </location>
</feature>
<feature type="sequence conflict" description="In Ref. 1; AAS68139." evidence="6" ref="1">
    <original>HL</original>
    <variation>PF</variation>
    <location>
        <begin position="210"/>
        <end position="211"/>
    </location>
</feature>
<accession>Q7XI85</accession>
<accession>B7F7W0</accession>
<accession>Q6Q500</accession>
<dbReference type="EMBL" id="AY559047">
    <property type="protein sequence ID" value="AAS68139.1"/>
    <property type="molecule type" value="mRNA"/>
</dbReference>
<dbReference type="EMBL" id="AP004185">
    <property type="protein sequence ID" value="BAD30497.1"/>
    <property type="molecule type" value="Genomic_DNA"/>
</dbReference>
<dbReference type="EMBL" id="AP004276">
    <property type="protein sequence ID" value="BAC79833.1"/>
    <property type="molecule type" value="Genomic_DNA"/>
</dbReference>
<dbReference type="EMBL" id="AP008213">
    <property type="protein sequence ID" value="BAF22020.1"/>
    <property type="molecule type" value="Genomic_DNA"/>
</dbReference>
<dbReference type="EMBL" id="AP014963">
    <property type="protein sequence ID" value="BAT02343.1"/>
    <property type="molecule type" value="Genomic_DNA"/>
</dbReference>
<dbReference type="EMBL" id="CM000144">
    <property type="protein sequence ID" value="EAZ40436.1"/>
    <property type="molecule type" value="Genomic_DNA"/>
</dbReference>
<dbReference type="EMBL" id="AK121889">
    <property type="protein sequence ID" value="BAH00708.1"/>
    <property type="molecule type" value="mRNA"/>
</dbReference>
<dbReference type="RefSeq" id="XP_015646179.1">
    <property type="nucleotide sequence ID" value="XM_015790693.1"/>
</dbReference>
<dbReference type="SMR" id="Q7XI85"/>
<dbReference type="FunCoup" id="Q7XI85">
    <property type="interactions" value="147"/>
</dbReference>
<dbReference type="STRING" id="39947.Q7XI85"/>
<dbReference type="PaxDb" id="39947-Q7XI85"/>
<dbReference type="EnsemblPlants" id="Os07t0581700-01">
    <property type="protein sequence ID" value="Os07t0581700-01"/>
    <property type="gene ID" value="Os07g0581700"/>
</dbReference>
<dbReference type="Gramene" id="Os07t0581700-01">
    <property type="protein sequence ID" value="Os07t0581700-01"/>
    <property type="gene ID" value="Os07g0581700"/>
</dbReference>
<dbReference type="KEGG" id="dosa:Os07g0581700"/>
<dbReference type="eggNOG" id="KOG0483">
    <property type="taxonomic scope" value="Eukaryota"/>
</dbReference>
<dbReference type="HOGENOM" id="CLU_100008_0_0_1"/>
<dbReference type="InParanoid" id="Q7XI85"/>
<dbReference type="OMA" id="DIMGRAV"/>
<dbReference type="OrthoDB" id="6159439at2759"/>
<dbReference type="Proteomes" id="UP000000763">
    <property type="component" value="Chromosome 7"/>
</dbReference>
<dbReference type="Proteomes" id="UP000007752">
    <property type="component" value="Chromosome 7"/>
</dbReference>
<dbReference type="Proteomes" id="UP000059680">
    <property type="component" value="Chromosome 7"/>
</dbReference>
<dbReference type="GO" id="GO:0005634">
    <property type="term" value="C:nucleus"/>
    <property type="evidence" value="ECO:0000318"/>
    <property type="project" value="GO_Central"/>
</dbReference>
<dbReference type="GO" id="GO:0000981">
    <property type="term" value="F:DNA-binding transcription factor activity, RNA polymerase II-specific"/>
    <property type="evidence" value="ECO:0007669"/>
    <property type="project" value="InterPro"/>
</dbReference>
<dbReference type="GO" id="GO:0043565">
    <property type="term" value="F:sequence-specific DNA binding"/>
    <property type="evidence" value="ECO:0000318"/>
    <property type="project" value="GO_Central"/>
</dbReference>
<dbReference type="GO" id="GO:0045893">
    <property type="term" value="P:positive regulation of DNA-templated transcription"/>
    <property type="evidence" value="ECO:0000318"/>
    <property type="project" value="GO_Central"/>
</dbReference>
<dbReference type="CDD" id="cd00086">
    <property type="entry name" value="homeodomain"/>
    <property type="match status" value="1"/>
</dbReference>
<dbReference type="FunFam" id="1.10.10.60:FF:000241">
    <property type="entry name" value="homeobox-leucine zipper protein ATHB-40"/>
    <property type="match status" value="1"/>
</dbReference>
<dbReference type="Gene3D" id="1.10.10.60">
    <property type="entry name" value="Homeodomain-like"/>
    <property type="match status" value="1"/>
</dbReference>
<dbReference type="InterPro" id="IPR001356">
    <property type="entry name" value="HD"/>
</dbReference>
<dbReference type="InterPro" id="IPR045224">
    <property type="entry name" value="HDZip_class_I_plant"/>
</dbReference>
<dbReference type="InterPro" id="IPR017970">
    <property type="entry name" value="Homeobox_CS"/>
</dbReference>
<dbReference type="InterPro" id="IPR009057">
    <property type="entry name" value="Homeodomain-like_sf"/>
</dbReference>
<dbReference type="InterPro" id="IPR000047">
    <property type="entry name" value="HTH_motif"/>
</dbReference>
<dbReference type="PANTHER" id="PTHR24326">
    <property type="entry name" value="HOMEOBOX-LEUCINE ZIPPER PROTEIN"/>
    <property type="match status" value="1"/>
</dbReference>
<dbReference type="PANTHER" id="PTHR24326:SF527">
    <property type="entry name" value="HOMEOBOX-LEUCINE ZIPPER PROTEIN ATHB-40"/>
    <property type="match status" value="1"/>
</dbReference>
<dbReference type="Pfam" id="PF00046">
    <property type="entry name" value="Homeodomain"/>
    <property type="match status" value="1"/>
</dbReference>
<dbReference type="PRINTS" id="PR00031">
    <property type="entry name" value="HTHREPRESSR"/>
</dbReference>
<dbReference type="SMART" id="SM00389">
    <property type="entry name" value="HOX"/>
    <property type="match status" value="1"/>
</dbReference>
<dbReference type="SUPFAM" id="SSF46689">
    <property type="entry name" value="Homeodomain-like"/>
    <property type="match status" value="1"/>
</dbReference>
<dbReference type="PROSITE" id="PS00027">
    <property type="entry name" value="HOMEOBOX_1"/>
    <property type="match status" value="1"/>
</dbReference>
<dbReference type="PROSITE" id="PS50071">
    <property type="entry name" value="HOMEOBOX_2"/>
    <property type="match status" value="1"/>
</dbReference>
<name>HOX14_ORYSJ</name>
<reference key="1">
    <citation type="journal article" date="2008" name="Plant Mol. Biol.">
        <title>A genome-wide survey of HD-Zip genes in rice and analysis of drought-responsive family members.</title>
        <authorList>
            <person name="Agalou A."/>
            <person name="Purwantomo S."/>
            <person name="Oevernaes E."/>
            <person name="Johannesson H."/>
            <person name="Zhu X."/>
            <person name="Estiati A."/>
            <person name="de Kam R.J."/>
            <person name="Engstroem P."/>
            <person name="Slamet-Loedin I.H."/>
            <person name="Zhu Z."/>
            <person name="Wang M."/>
            <person name="Xiong L."/>
            <person name="Meijer A.H."/>
            <person name="Ouwerkerk P.B.F."/>
        </authorList>
    </citation>
    <scope>NUCLEOTIDE SEQUENCE [MRNA]</scope>
    <scope>TISSUE SPECIFICITY</scope>
    <scope>GENE FAMILY</scope>
    <scope>NOMENCLATURE</scope>
    <source>
        <strain>cv. Nipponbare</strain>
    </source>
</reference>
<reference key="2">
    <citation type="journal article" date="2005" name="Nature">
        <title>The map-based sequence of the rice genome.</title>
        <authorList>
            <consortium name="International rice genome sequencing project (IRGSP)"/>
        </authorList>
    </citation>
    <scope>NUCLEOTIDE SEQUENCE [LARGE SCALE GENOMIC DNA]</scope>
    <source>
        <strain>cv. Nipponbare</strain>
    </source>
</reference>
<reference key="3">
    <citation type="journal article" date="2008" name="Nucleic Acids Res.">
        <title>The rice annotation project database (RAP-DB): 2008 update.</title>
        <authorList>
            <consortium name="The rice annotation project (RAP)"/>
        </authorList>
    </citation>
    <scope>GENOME REANNOTATION</scope>
    <source>
        <strain>cv. Nipponbare</strain>
    </source>
</reference>
<reference key="4">
    <citation type="journal article" date="2013" name="Rice">
        <title>Improvement of the Oryza sativa Nipponbare reference genome using next generation sequence and optical map data.</title>
        <authorList>
            <person name="Kawahara Y."/>
            <person name="de la Bastide M."/>
            <person name="Hamilton J.P."/>
            <person name="Kanamori H."/>
            <person name="McCombie W.R."/>
            <person name="Ouyang S."/>
            <person name="Schwartz D.C."/>
            <person name="Tanaka T."/>
            <person name="Wu J."/>
            <person name="Zhou S."/>
            <person name="Childs K.L."/>
            <person name="Davidson R.M."/>
            <person name="Lin H."/>
            <person name="Quesada-Ocampo L."/>
            <person name="Vaillancourt B."/>
            <person name="Sakai H."/>
            <person name="Lee S.S."/>
            <person name="Kim J."/>
            <person name="Numa H."/>
            <person name="Itoh T."/>
            <person name="Buell C.R."/>
            <person name="Matsumoto T."/>
        </authorList>
    </citation>
    <scope>GENOME REANNOTATION</scope>
    <source>
        <strain>cv. Nipponbare</strain>
    </source>
</reference>
<reference key="5">
    <citation type="journal article" date="2005" name="PLoS Biol.">
        <title>The genomes of Oryza sativa: a history of duplications.</title>
        <authorList>
            <person name="Yu J."/>
            <person name="Wang J."/>
            <person name="Lin W."/>
            <person name="Li S."/>
            <person name="Li H."/>
            <person name="Zhou J."/>
            <person name="Ni P."/>
            <person name="Dong W."/>
            <person name="Hu S."/>
            <person name="Zeng C."/>
            <person name="Zhang J."/>
            <person name="Zhang Y."/>
            <person name="Li R."/>
            <person name="Xu Z."/>
            <person name="Li S."/>
            <person name="Li X."/>
            <person name="Zheng H."/>
            <person name="Cong L."/>
            <person name="Lin L."/>
            <person name="Yin J."/>
            <person name="Geng J."/>
            <person name="Li G."/>
            <person name="Shi J."/>
            <person name="Liu J."/>
            <person name="Lv H."/>
            <person name="Li J."/>
            <person name="Wang J."/>
            <person name="Deng Y."/>
            <person name="Ran L."/>
            <person name="Shi X."/>
            <person name="Wang X."/>
            <person name="Wu Q."/>
            <person name="Li C."/>
            <person name="Ren X."/>
            <person name="Wang J."/>
            <person name="Wang X."/>
            <person name="Li D."/>
            <person name="Liu D."/>
            <person name="Zhang X."/>
            <person name="Ji Z."/>
            <person name="Zhao W."/>
            <person name="Sun Y."/>
            <person name="Zhang Z."/>
            <person name="Bao J."/>
            <person name="Han Y."/>
            <person name="Dong L."/>
            <person name="Ji J."/>
            <person name="Chen P."/>
            <person name="Wu S."/>
            <person name="Liu J."/>
            <person name="Xiao Y."/>
            <person name="Bu D."/>
            <person name="Tan J."/>
            <person name="Yang L."/>
            <person name="Ye C."/>
            <person name="Zhang J."/>
            <person name="Xu J."/>
            <person name="Zhou Y."/>
            <person name="Yu Y."/>
            <person name="Zhang B."/>
            <person name="Zhuang S."/>
            <person name="Wei H."/>
            <person name="Liu B."/>
            <person name="Lei M."/>
            <person name="Yu H."/>
            <person name="Li Y."/>
            <person name="Xu H."/>
            <person name="Wei S."/>
            <person name="He X."/>
            <person name="Fang L."/>
            <person name="Zhang Z."/>
            <person name="Zhang Y."/>
            <person name="Huang X."/>
            <person name="Su Z."/>
            <person name="Tong W."/>
            <person name="Li J."/>
            <person name="Tong Z."/>
            <person name="Li S."/>
            <person name="Ye J."/>
            <person name="Wang L."/>
            <person name="Fang L."/>
            <person name="Lei T."/>
            <person name="Chen C.-S."/>
            <person name="Chen H.-C."/>
            <person name="Xu Z."/>
            <person name="Li H."/>
            <person name="Huang H."/>
            <person name="Zhang F."/>
            <person name="Xu H."/>
            <person name="Li N."/>
            <person name="Zhao C."/>
            <person name="Li S."/>
            <person name="Dong L."/>
            <person name="Huang Y."/>
            <person name="Li L."/>
            <person name="Xi Y."/>
            <person name="Qi Q."/>
            <person name="Li W."/>
            <person name="Zhang B."/>
            <person name="Hu W."/>
            <person name="Zhang Y."/>
            <person name="Tian X."/>
            <person name="Jiao Y."/>
            <person name="Liang X."/>
            <person name="Jin J."/>
            <person name="Gao L."/>
            <person name="Zheng W."/>
            <person name="Hao B."/>
            <person name="Liu S.-M."/>
            <person name="Wang W."/>
            <person name="Yuan L."/>
            <person name="Cao M."/>
            <person name="McDermott J."/>
            <person name="Samudrala R."/>
            <person name="Wang J."/>
            <person name="Wong G.K.-S."/>
            <person name="Yang H."/>
        </authorList>
    </citation>
    <scope>NUCLEOTIDE SEQUENCE [LARGE SCALE GENOMIC DNA]</scope>
    <source>
        <strain>cv. Nipponbare</strain>
    </source>
</reference>
<reference key="6">
    <citation type="journal article" date="2003" name="Science">
        <title>Collection, mapping, and annotation of over 28,000 cDNA clones from japonica rice.</title>
        <authorList>
            <consortium name="The rice full-length cDNA consortium"/>
        </authorList>
    </citation>
    <scope>NUCLEOTIDE SEQUENCE [LARGE SCALE MRNA]</scope>
    <source>
        <strain>cv. Nipponbare</strain>
    </source>
</reference>
<proteinExistence type="evidence at transcript level"/>
<organism>
    <name type="scientific">Oryza sativa subsp. japonica</name>
    <name type="common">Rice</name>
    <dbReference type="NCBI Taxonomy" id="39947"/>
    <lineage>
        <taxon>Eukaryota</taxon>
        <taxon>Viridiplantae</taxon>
        <taxon>Streptophyta</taxon>
        <taxon>Embryophyta</taxon>
        <taxon>Tracheophyta</taxon>
        <taxon>Spermatophyta</taxon>
        <taxon>Magnoliopsida</taxon>
        <taxon>Liliopsida</taxon>
        <taxon>Poales</taxon>
        <taxon>Poaceae</taxon>
        <taxon>BOP clade</taxon>
        <taxon>Oryzoideae</taxon>
        <taxon>Oryzeae</taxon>
        <taxon>Oryzinae</taxon>
        <taxon>Oryza</taxon>
        <taxon>Oryza sativa</taxon>
    </lineage>
</organism>